<organism>
    <name type="scientific">Acidovorax sp. (strain JS42)</name>
    <dbReference type="NCBI Taxonomy" id="232721"/>
    <lineage>
        <taxon>Bacteria</taxon>
        <taxon>Pseudomonadati</taxon>
        <taxon>Pseudomonadota</taxon>
        <taxon>Betaproteobacteria</taxon>
        <taxon>Burkholderiales</taxon>
        <taxon>Comamonadaceae</taxon>
        <taxon>Acidovorax</taxon>
    </lineage>
</organism>
<name>ACPS_ACISJ</name>
<feature type="chain" id="PRO_1000075628" description="Holo-[acyl-carrier-protein] synthase">
    <location>
        <begin position="1"/>
        <end position="130"/>
    </location>
</feature>
<feature type="binding site" evidence="1">
    <location>
        <position position="8"/>
    </location>
    <ligand>
        <name>Mg(2+)</name>
        <dbReference type="ChEBI" id="CHEBI:18420"/>
    </ligand>
</feature>
<feature type="binding site" evidence="1">
    <location>
        <position position="62"/>
    </location>
    <ligand>
        <name>Mg(2+)</name>
        <dbReference type="ChEBI" id="CHEBI:18420"/>
    </ligand>
</feature>
<sequence length="130" mass="14562">MIYGIGTDICDVRRIRASLARHGDRFAEKVLADGELATWRARSARWPERGVRYLATRFSAKEAFSKAIGLGLHMPMTWRHCEVANLPSGQPTIVLHGALQDWFAARGLRCHLSVTDESDYAASFCVVEKD</sequence>
<keyword id="KW-0963">Cytoplasm</keyword>
<keyword id="KW-0275">Fatty acid biosynthesis</keyword>
<keyword id="KW-0276">Fatty acid metabolism</keyword>
<keyword id="KW-0444">Lipid biosynthesis</keyword>
<keyword id="KW-0443">Lipid metabolism</keyword>
<keyword id="KW-0460">Magnesium</keyword>
<keyword id="KW-0479">Metal-binding</keyword>
<keyword id="KW-0808">Transferase</keyword>
<accession>A1WAW0</accession>
<gene>
    <name evidence="1" type="primary">acpS</name>
    <name type="ordered locus">Ajs_3262</name>
</gene>
<evidence type="ECO:0000255" key="1">
    <source>
        <dbReference type="HAMAP-Rule" id="MF_00101"/>
    </source>
</evidence>
<proteinExistence type="inferred from homology"/>
<comment type="function">
    <text evidence="1">Transfers the 4'-phosphopantetheine moiety from coenzyme A to a Ser of acyl-carrier-protein.</text>
</comment>
<comment type="catalytic activity">
    <reaction evidence="1">
        <text>apo-[ACP] + CoA = holo-[ACP] + adenosine 3',5'-bisphosphate + H(+)</text>
        <dbReference type="Rhea" id="RHEA:12068"/>
        <dbReference type="Rhea" id="RHEA-COMP:9685"/>
        <dbReference type="Rhea" id="RHEA-COMP:9690"/>
        <dbReference type="ChEBI" id="CHEBI:15378"/>
        <dbReference type="ChEBI" id="CHEBI:29999"/>
        <dbReference type="ChEBI" id="CHEBI:57287"/>
        <dbReference type="ChEBI" id="CHEBI:58343"/>
        <dbReference type="ChEBI" id="CHEBI:64479"/>
        <dbReference type="EC" id="2.7.8.7"/>
    </reaction>
</comment>
<comment type="cofactor">
    <cofactor evidence="1">
        <name>Mg(2+)</name>
        <dbReference type="ChEBI" id="CHEBI:18420"/>
    </cofactor>
</comment>
<comment type="subcellular location">
    <subcellularLocation>
        <location evidence="1">Cytoplasm</location>
    </subcellularLocation>
</comment>
<comment type="similarity">
    <text evidence="1">Belongs to the P-Pant transferase superfamily. AcpS family.</text>
</comment>
<reference key="1">
    <citation type="submission" date="2006-12" db="EMBL/GenBank/DDBJ databases">
        <title>Complete sequence of chromosome 1 of Acidovorax sp. JS42.</title>
        <authorList>
            <person name="Copeland A."/>
            <person name="Lucas S."/>
            <person name="Lapidus A."/>
            <person name="Barry K."/>
            <person name="Detter J.C."/>
            <person name="Glavina del Rio T."/>
            <person name="Dalin E."/>
            <person name="Tice H."/>
            <person name="Pitluck S."/>
            <person name="Chertkov O."/>
            <person name="Brettin T."/>
            <person name="Bruce D."/>
            <person name="Han C."/>
            <person name="Tapia R."/>
            <person name="Gilna P."/>
            <person name="Schmutz J."/>
            <person name="Larimer F."/>
            <person name="Land M."/>
            <person name="Hauser L."/>
            <person name="Kyrpides N."/>
            <person name="Kim E."/>
            <person name="Stahl D."/>
            <person name="Richardson P."/>
        </authorList>
    </citation>
    <scope>NUCLEOTIDE SEQUENCE [LARGE SCALE GENOMIC DNA]</scope>
    <source>
        <strain>JS42</strain>
    </source>
</reference>
<protein>
    <recommendedName>
        <fullName evidence="1">Holo-[acyl-carrier-protein] synthase</fullName>
        <shortName evidence="1">Holo-ACP synthase</shortName>
        <ecNumber evidence="1">2.7.8.7</ecNumber>
    </recommendedName>
    <alternativeName>
        <fullName evidence="1">4'-phosphopantetheinyl transferase AcpS</fullName>
    </alternativeName>
</protein>
<dbReference type="EC" id="2.7.8.7" evidence="1"/>
<dbReference type="EMBL" id="CP000539">
    <property type="protein sequence ID" value="ABM43385.1"/>
    <property type="molecule type" value="Genomic_DNA"/>
</dbReference>
<dbReference type="SMR" id="A1WAW0"/>
<dbReference type="STRING" id="232721.Ajs_3262"/>
<dbReference type="KEGG" id="ajs:Ajs_3262"/>
<dbReference type="eggNOG" id="COG0736">
    <property type="taxonomic scope" value="Bacteria"/>
</dbReference>
<dbReference type="HOGENOM" id="CLU_089696_3_1_4"/>
<dbReference type="Proteomes" id="UP000000645">
    <property type="component" value="Chromosome"/>
</dbReference>
<dbReference type="GO" id="GO:0005737">
    <property type="term" value="C:cytoplasm"/>
    <property type="evidence" value="ECO:0007669"/>
    <property type="project" value="UniProtKB-SubCell"/>
</dbReference>
<dbReference type="GO" id="GO:0008897">
    <property type="term" value="F:holo-[acyl-carrier-protein] synthase activity"/>
    <property type="evidence" value="ECO:0007669"/>
    <property type="project" value="UniProtKB-UniRule"/>
</dbReference>
<dbReference type="GO" id="GO:0000287">
    <property type="term" value="F:magnesium ion binding"/>
    <property type="evidence" value="ECO:0007669"/>
    <property type="project" value="UniProtKB-UniRule"/>
</dbReference>
<dbReference type="GO" id="GO:0006633">
    <property type="term" value="P:fatty acid biosynthetic process"/>
    <property type="evidence" value="ECO:0007669"/>
    <property type="project" value="UniProtKB-UniRule"/>
</dbReference>
<dbReference type="Gene3D" id="3.90.470.20">
    <property type="entry name" value="4'-phosphopantetheinyl transferase domain"/>
    <property type="match status" value="1"/>
</dbReference>
<dbReference type="HAMAP" id="MF_00101">
    <property type="entry name" value="AcpS"/>
    <property type="match status" value="1"/>
</dbReference>
<dbReference type="InterPro" id="IPR008278">
    <property type="entry name" value="4-PPantetheinyl_Trfase_dom"/>
</dbReference>
<dbReference type="InterPro" id="IPR037143">
    <property type="entry name" value="4-PPantetheinyl_Trfase_dom_sf"/>
</dbReference>
<dbReference type="InterPro" id="IPR002582">
    <property type="entry name" value="ACPS"/>
</dbReference>
<dbReference type="InterPro" id="IPR004568">
    <property type="entry name" value="Ppantetheine-prot_Trfase_dom"/>
</dbReference>
<dbReference type="NCBIfam" id="TIGR00516">
    <property type="entry name" value="acpS"/>
    <property type="match status" value="1"/>
</dbReference>
<dbReference type="NCBIfam" id="TIGR00556">
    <property type="entry name" value="pantethn_trn"/>
    <property type="match status" value="1"/>
</dbReference>
<dbReference type="Pfam" id="PF01648">
    <property type="entry name" value="ACPS"/>
    <property type="match status" value="1"/>
</dbReference>
<dbReference type="SUPFAM" id="SSF56214">
    <property type="entry name" value="4'-phosphopantetheinyl transferase"/>
    <property type="match status" value="1"/>
</dbReference>